<organism>
    <name type="scientific">Geobacillus stearothermophilus</name>
    <name type="common">Bacillus stearothermophilus</name>
    <dbReference type="NCBI Taxonomy" id="1422"/>
    <lineage>
        <taxon>Bacteria</taxon>
        <taxon>Bacillati</taxon>
        <taxon>Bacillota</taxon>
        <taxon>Bacilli</taxon>
        <taxon>Bacillales</taxon>
        <taxon>Anoxybacillaceae</taxon>
        <taxon>Geobacillus</taxon>
    </lineage>
</organism>
<reference key="1">
    <citation type="journal article" date="1985" name="Eur. J. Biochem.">
        <title>The complete primary structure of ribosomal proteins L1, L14, L15, L23, L24 and L29 from Bacillus stearothermophilus.</title>
        <authorList>
            <person name="Kimura M."/>
            <person name="Kimura J."/>
            <person name="Ashman K."/>
        </authorList>
    </citation>
    <scope>PROTEIN SEQUENCE</scope>
</reference>
<sequence length="146" mass="15606">MKLHELQPAPGSRKKAVRVGRGIGSGNGKTSGRGQKGQNARSGGGVRLGFEGGQTPLFRRLPKRGFTNINRKEYAVVNLEKLNRFEDGTEVTPELLLETGVISKLKSGVKILGKGQIEKKLTVKAHKFSASAKEAIEAAGGKTEVI</sequence>
<gene>
    <name evidence="1" type="primary">rplO</name>
</gene>
<dbReference type="PIR" id="A02795">
    <property type="entry name" value="R5BS15"/>
</dbReference>
<dbReference type="RefSeq" id="WP_011229638.1">
    <property type="nucleotide sequence ID" value="NZ_CBCSGJ010000012.1"/>
</dbReference>
<dbReference type="SMR" id="P04452"/>
<dbReference type="GeneID" id="32062113"/>
<dbReference type="GeneID" id="89612881"/>
<dbReference type="OrthoDB" id="9810293at2"/>
<dbReference type="GO" id="GO:0022625">
    <property type="term" value="C:cytosolic large ribosomal subunit"/>
    <property type="evidence" value="ECO:0007669"/>
    <property type="project" value="TreeGrafter"/>
</dbReference>
<dbReference type="GO" id="GO:0019843">
    <property type="term" value="F:rRNA binding"/>
    <property type="evidence" value="ECO:0007669"/>
    <property type="project" value="UniProtKB-UniRule"/>
</dbReference>
<dbReference type="GO" id="GO:0003735">
    <property type="term" value="F:structural constituent of ribosome"/>
    <property type="evidence" value="ECO:0007669"/>
    <property type="project" value="InterPro"/>
</dbReference>
<dbReference type="GO" id="GO:0006412">
    <property type="term" value="P:translation"/>
    <property type="evidence" value="ECO:0007669"/>
    <property type="project" value="UniProtKB-UniRule"/>
</dbReference>
<dbReference type="FunFam" id="3.100.10.10:FF:000004">
    <property type="entry name" value="50S ribosomal protein L15"/>
    <property type="match status" value="1"/>
</dbReference>
<dbReference type="Gene3D" id="3.100.10.10">
    <property type="match status" value="1"/>
</dbReference>
<dbReference type="HAMAP" id="MF_01341">
    <property type="entry name" value="Ribosomal_uL15"/>
    <property type="match status" value="1"/>
</dbReference>
<dbReference type="InterPro" id="IPR030878">
    <property type="entry name" value="Ribosomal_uL15"/>
</dbReference>
<dbReference type="InterPro" id="IPR021131">
    <property type="entry name" value="Ribosomal_uL15/eL18"/>
</dbReference>
<dbReference type="InterPro" id="IPR036227">
    <property type="entry name" value="Ribosomal_uL15/eL18_sf"/>
</dbReference>
<dbReference type="InterPro" id="IPR005749">
    <property type="entry name" value="Ribosomal_uL15_bac-type"/>
</dbReference>
<dbReference type="InterPro" id="IPR001196">
    <property type="entry name" value="Ribosomal_uL15_CS"/>
</dbReference>
<dbReference type="NCBIfam" id="TIGR01071">
    <property type="entry name" value="rplO_bact"/>
    <property type="match status" value="1"/>
</dbReference>
<dbReference type="PANTHER" id="PTHR12934">
    <property type="entry name" value="50S RIBOSOMAL PROTEIN L15"/>
    <property type="match status" value="1"/>
</dbReference>
<dbReference type="PANTHER" id="PTHR12934:SF11">
    <property type="entry name" value="LARGE RIBOSOMAL SUBUNIT PROTEIN UL15M"/>
    <property type="match status" value="1"/>
</dbReference>
<dbReference type="Pfam" id="PF00828">
    <property type="entry name" value="Ribosomal_L27A"/>
    <property type="match status" value="1"/>
</dbReference>
<dbReference type="SUPFAM" id="SSF52080">
    <property type="entry name" value="Ribosomal proteins L15p and L18e"/>
    <property type="match status" value="1"/>
</dbReference>
<dbReference type="PROSITE" id="PS00475">
    <property type="entry name" value="RIBOSOMAL_L15"/>
    <property type="match status" value="1"/>
</dbReference>
<name>RL15_GEOSE</name>
<feature type="chain" id="PRO_0000104673" description="Large ribosomal subunit protein uL15">
    <location>
        <begin position="1"/>
        <end position="146"/>
    </location>
</feature>
<feature type="region of interest" description="Disordered" evidence="2">
    <location>
        <begin position="1"/>
        <end position="51"/>
    </location>
</feature>
<feature type="compositionally biased region" description="Gly residues" evidence="2">
    <location>
        <begin position="21"/>
        <end position="35"/>
    </location>
</feature>
<feature type="compositionally biased region" description="Gly residues" evidence="2">
    <location>
        <begin position="42"/>
        <end position="51"/>
    </location>
</feature>
<protein>
    <recommendedName>
        <fullName evidence="1">Large ribosomal subunit protein uL15</fullName>
    </recommendedName>
    <alternativeName>
        <fullName evidence="3">50S ribosomal protein L15</fullName>
    </alternativeName>
</protein>
<evidence type="ECO:0000255" key="1">
    <source>
        <dbReference type="HAMAP-Rule" id="MF_01341"/>
    </source>
</evidence>
<evidence type="ECO:0000256" key="2">
    <source>
        <dbReference type="SAM" id="MobiDB-lite"/>
    </source>
</evidence>
<evidence type="ECO:0000305" key="3"/>
<proteinExistence type="evidence at protein level"/>
<keyword id="KW-0903">Direct protein sequencing</keyword>
<keyword id="KW-0687">Ribonucleoprotein</keyword>
<keyword id="KW-0689">Ribosomal protein</keyword>
<keyword id="KW-0694">RNA-binding</keyword>
<keyword id="KW-0699">rRNA-binding</keyword>
<accession>P04452</accession>
<comment type="function">
    <text evidence="1">Binds to the 23S rRNA.</text>
</comment>
<comment type="subunit">
    <text>Part of the 50S ribosomal subunit.</text>
</comment>
<comment type="similarity">
    <text evidence="1">Belongs to the universal ribosomal protein uL15 family.</text>
</comment>